<reference key="1">
    <citation type="submission" date="2006-01" db="EMBL/GenBank/DDBJ databases">
        <title>Complete sequence of Anaeromyxobacter dehalogenans 2CP-C.</title>
        <authorList>
            <person name="Copeland A."/>
            <person name="Lucas S."/>
            <person name="Lapidus A."/>
            <person name="Barry K."/>
            <person name="Detter J.C."/>
            <person name="Glavina T."/>
            <person name="Hammon N."/>
            <person name="Israni S."/>
            <person name="Pitluck S."/>
            <person name="Brettin T."/>
            <person name="Bruce D."/>
            <person name="Han C."/>
            <person name="Tapia R."/>
            <person name="Gilna P."/>
            <person name="Kiss H."/>
            <person name="Schmutz J."/>
            <person name="Larimer F."/>
            <person name="Land M."/>
            <person name="Kyrpides N."/>
            <person name="Anderson I."/>
            <person name="Sanford R.A."/>
            <person name="Ritalahti K.M."/>
            <person name="Thomas H.S."/>
            <person name="Kirby J.R."/>
            <person name="Zhulin I.B."/>
            <person name="Loeffler F.E."/>
            <person name="Richardson P."/>
        </authorList>
    </citation>
    <scope>NUCLEOTIDE SEQUENCE [LARGE SCALE GENOMIC DNA]</scope>
    <source>
        <strain>2CP-C</strain>
    </source>
</reference>
<organism>
    <name type="scientific">Anaeromyxobacter dehalogenans (strain 2CP-C)</name>
    <dbReference type="NCBI Taxonomy" id="290397"/>
    <lineage>
        <taxon>Bacteria</taxon>
        <taxon>Pseudomonadati</taxon>
        <taxon>Myxococcota</taxon>
        <taxon>Myxococcia</taxon>
        <taxon>Myxococcales</taxon>
        <taxon>Cystobacterineae</taxon>
        <taxon>Anaeromyxobacteraceae</taxon>
        <taxon>Anaeromyxobacter</taxon>
    </lineage>
</organism>
<keyword id="KW-0238">DNA-binding</keyword>
<keyword id="KW-0479">Metal-binding</keyword>
<keyword id="KW-0533">Nickel</keyword>
<keyword id="KW-1185">Reference proteome</keyword>
<keyword id="KW-0804">Transcription</keyword>
<keyword id="KW-0805">Transcription regulation</keyword>
<protein>
    <recommendedName>
        <fullName evidence="1">Putative nickel-responsive regulator</fullName>
    </recommendedName>
</protein>
<proteinExistence type="inferred from homology"/>
<name>NIKR_ANADE</name>
<dbReference type="EMBL" id="CP000251">
    <property type="protein sequence ID" value="ABC80273.1"/>
    <property type="molecule type" value="Genomic_DNA"/>
</dbReference>
<dbReference type="SMR" id="Q2IN94"/>
<dbReference type="STRING" id="290397.Adeh_0497"/>
<dbReference type="KEGG" id="ade:Adeh_0497"/>
<dbReference type="eggNOG" id="COG0864">
    <property type="taxonomic scope" value="Bacteria"/>
</dbReference>
<dbReference type="HOGENOM" id="CLU_113319_1_2_7"/>
<dbReference type="OrthoDB" id="9806294at2"/>
<dbReference type="Proteomes" id="UP000001935">
    <property type="component" value="Chromosome"/>
</dbReference>
<dbReference type="GO" id="GO:0003677">
    <property type="term" value="F:DNA binding"/>
    <property type="evidence" value="ECO:0007669"/>
    <property type="project" value="UniProtKB-KW"/>
</dbReference>
<dbReference type="GO" id="GO:0003700">
    <property type="term" value="F:DNA-binding transcription factor activity"/>
    <property type="evidence" value="ECO:0007669"/>
    <property type="project" value="UniProtKB-UniRule"/>
</dbReference>
<dbReference type="GO" id="GO:0016151">
    <property type="term" value="F:nickel cation binding"/>
    <property type="evidence" value="ECO:0007669"/>
    <property type="project" value="UniProtKB-UniRule"/>
</dbReference>
<dbReference type="GO" id="GO:0010045">
    <property type="term" value="P:response to nickel cation"/>
    <property type="evidence" value="ECO:0007669"/>
    <property type="project" value="InterPro"/>
</dbReference>
<dbReference type="CDD" id="cd22231">
    <property type="entry name" value="RHH_NikR_HicB-like"/>
    <property type="match status" value="1"/>
</dbReference>
<dbReference type="Gene3D" id="3.30.70.1150">
    <property type="entry name" value="ACT-like. Chain A, domain 2"/>
    <property type="match status" value="1"/>
</dbReference>
<dbReference type="Gene3D" id="1.10.1220.10">
    <property type="entry name" value="Met repressor-like"/>
    <property type="match status" value="1"/>
</dbReference>
<dbReference type="HAMAP" id="MF_00476">
    <property type="entry name" value="NikR"/>
    <property type="match status" value="1"/>
</dbReference>
<dbReference type="InterPro" id="IPR027271">
    <property type="entry name" value="Acetolactate_synth/TF_NikR_C"/>
</dbReference>
<dbReference type="InterPro" id="IPR045865">
    <property type="entry name" value="ACT-like_dom_sf"/>
</dbReference>
<dbReference type="InterPro" id="IPR013321">
    <property type="entry name" value="Arc_rbn_hlx_hlx"/>
</dbReference>
<dbReference type="InterPro" id="IPR002145">
    <property type="entry name" value="CopG"/>
</dbReference>
<dbReference type="InterPro" id="IPR050192">
    <property type="entry name" value="CopG/NikR_regulator"/>
</dbReference>
<dbReference type="InterPro" id="IPR022988">
    <property type="entry name" value="Ni_resp_reg_NikR"/>
</dbReference>
<dbReference type="InterPro" id="IPR010985">
    <property type="entry name" value="Ribbon_hlx_hlx"/>
</dbReference>
<dbReference type="InterPro" id="IPR014864">
    <property type="entry name" value="TF_NikR_Ni-bd_C"/>
</dbReference>
<dbReference type="NCBIfam" id="NF001884">
    <property type="entry name" value="PRK00630.1"/>
    <property type="match status" value="1"/>
</dbReference>
<dbReference type="NCBIfam" id="NF002169">
    <property type="entry name" value="PRK01002.1"/>
    <property type="match status" value="1"/>
</dbReference>
<dbReference type="NCBIfam" id="NF002815">
    <property type="entry name" value="PRK02967.1"/>
    <property type="match status" value="1"/>
</dbReference>
<dbReference type="NCBIfam" id="NF003381">
    <property type="entry name" value="PRK04460.1"/>
    <property type="match status" value="1"/>
</dbReference>
<dbReference type="PANTHER" id="PTHR34719">
    <property type="entry name" value="NICKEL-RESPONSIVE REGULATOR"/>
    <property type="match status" value="1"/>
</dbReference>
<dbReference type="PANTHER" id="PTHR34719:SF2">
    <property type="entry name" value="NICKEL-RESPONSIVE REGULATOR"/>
    <property type="match status" value="1"/>
</dbReference>
<dbReference type="Pfam" id="PF08753">
    <property type="entry name" value="NikR_C"/>
    <property type="match status" value="1"/>
</dbReference>
<dbReference type="Pfam" id="PF01402">
    <property type="entry name" value="RHH_1"/>
    <property type="match status" value="1"/>
</dbReference>
<dbReference type="SUPFAM" id="SSF55021">
    <property type="entry name" value="ACT-like"/>
    <property type="match status" value="1"/>
</dbReference>
<dbReference type="SUPFAM" id="SSF47598">
    <property type="entry name" value="Ribbon-helix-helix"/>
    <property type="match status" value="1"/>
</dbReference>
<evidence type="ECO:0000255" key="1">
    <source>
        <dbReference type="HAMAP-Rule" id="MF_00476"/>
    </source>
</evidence>
<gene>
    <name type="ordered locus">Adeh_0497</name>
</gene>
<feature type="chain" id="PRO_1000014055" description="Putative nickel-responsive regulator">
    <location>
        <begin position="1"/>
        <end position="139"/>
    </location>
</feature>
<feature type="binding site" evidence="1">
    <location>
        <position position="79"/>
    </location>
    <ligand>
        <name>Ni(2+)</name>
        <dbReference type="ChEBI" id="CHEBI:49786"/>
    </ligand>
</feature>
<feature type="binding site" evidence="1">
    <location>
        <position position="90"/>
    </location>
    <ligand>
        <name>Ni(2+)</name>
        <dbReference type="ChEBI" id="CHEBI:49786"/>
    </ligand>
</feature>
<feature type="binding site" evidence="1">
    <location>
        <position position="92"/>
    </location>
    <ligand>
        <name>Ni(2+)</name>
        <dbReference type="ChEBI" id="CHEBI:49786"/>
    </ligand>
</feature>
<feature type="binding site" evidence="1">
    <location>
        <position position="98"/>
    </location>
    <ligand>
        <name>Ni(2+)</name>
        <dbReference type="ChEBI" id="CHEBI:49786"/>
    </ligand>
</feature>
<accession>Q2IN94</accession>
<sequence>MLERIGISLEDGLLEQFDKLIAEKGYVNRSEAVRDLIRDALVQRAFTESSGREERVAVVTLVYDHDSSSLAQKLAHIQHENHRAVVSALHVHMDAHNCLEVLVLRGRGKDVVAMGESLVATKGVKYGKLVPATAGHDLR</sequence>
<comment type="function">
    <text evidence="1">Transcriptional regulator.</text>
</comment>
<comment type="cofactor">
    <cofactor evidence="1">
        <name>Ni(2+)</name>
        <dbReference type="ChEBI" id="CHEBI:49786"/>
    </cofactor>
    <text evidence="1">Binds 1 nickel ion per subunit.</text>
</comment>
<comment type="similarity">
    <text evidence="1">Belongs to the transcriptional regulatory CopG/NikR family.</text>
</comment>